<name>BGL23_ARATH</name>
<feature type="signal peptide" evidence="7">
    <location>
        <begin position="1"/>
        <end position="24"/>
    </location>
</feature>
<feature type="chain" id="PRO_0000389585" description="Beta-glucosidase 23">
    <location>
        <begin position="25"/>
        <end position="524"/>
    </location>
</feature>
<feature type="short sequence motif" description="Prevents secretion from ER" evidence="5">
    <location>
        <begin position="521"/>
        <end position="524"/>
    </location>
</feature>
<feature type="active site" description="Proton donor" evidence="2">
    <location>
        <position position="203"/>
    </location>
</feature>
<feature type="active site" description="Nucleophile" evidence="2">
    <location>
        <position position="418"/>
    </location>
</feature>
<feature type="binding site" evidence="2">
    <location>
        <position position="54"/>
    </location>
    <ligand>
        <name>a beta-D-glucoside</name>
        <dbReference type="ChEBI" id="CHEBI:22798"/>
    </ligand>
</feature>
<feature type="binding site" evidence="2">
    <location>
        <position position="157"/>
    </location>
    <ligand>
        <name>a beta-D-glucoside</name>
        <dbReference type="ChEBI" id="CHEBI:22798"/>
    </ligand>
</feature>
<feature type="binding site" evidence="2">
    <location>
        <begin position="202"/>
        <end position="203"/>
    </location>
    <ligand>
        <name>a beta-D-glucoside</name>
        <dbReference type="ChEBI" id="CHEBI:22798"/>
    </ligand>
</feature>
<feature type="binding site" evidence="2">
    <location>
        <position position="346"/>
    </location>
    <ligand>
        <name>a beta-D-glucoside</name>
        <dbReference type="ChEBI" id="CHEBI:22798"/>
    </ligand>
</feature>
<feature type="binding site" evidence="3">
    <location>
        <position position="418"/>
    </location>
    <ligand>
        <name>a beta-D-glucoside</name>
        <dbReference type="ChEBI" id="CHEBI:22798"/>
    </ligand>
</feature>
<feature type="binding site" evidence="2">
    <location>
        <position position="468"/>
    </location>
    <ligand>
        <name>a beta-D-glucoside</name>
        <dbReference type="ChEBI" id="CHEBI:22798"/>
    </ligand>
</feature>
<feature type="binding site" evidence="2">
    <location>
        <begin position="475"/>
        <end position="476"/>
    </location>
    <ligand>
        <name>a beta-D-glucoside</name>
        <dbReference type="ChEBI" id="CHEBI:22798"/>
    </ligand>
</feature>
<feature type="binding site" evidence="1">
    <location>
        <position position="484"/>
    </location>
    <ligand>
        <name>a beta-D-glucoside</name>
        <dbReference type="ChEBI" id="CHEBI:22798"/>
    </ligand>
</feature>
<feature type="glycosylation site" description="N-linked (GlcNAc...) asparagine" evidence="4">
    <location>
        <position position="60"/>
    </location>
</feature>
<feature type="glycosylation site" description="N-linked (GlcNAc...) asparagine" evidence="4">
    <location>
        <position position="461"/>
    </location>
</feature>
<feature type="glycosylation site" description="N-linked (GlcNAc...) asparagine" evidence="4">
    <location>
        <position position="494"/>
    </location>
</feature>
<feature type="disulfide bond" evidence="2">
    <location>
        <begin position="222"/>
        <end position="230"/>
    </location>
</feature>
<feature type="mutagenesis site" description="In leb-1; loss of homodimerization resulting in fewer and larger ER bodies." evidence="13">
    <original>C</original>
    <variation>Y</variation>
    <location>
        <position position="29"/>
    </location>
</feature>
<feature type="sequence conflict" description="In Ref. 2; CAB50792/CAA61592." evidence="19" ref="2">
    <original>S</original>
    <variation>L</variation>
    <location>
        <position position="208"/>
    </location>
</feature>
<feature type="sequence conflict" description="In Ref. 1; AAB38783." evidence="19" ref="1">
    <original>C</original>
    <variation>S</variation>
    <location>
        <position position="222"/>
    </location>
</feature>
<feature type="sequence conflict" description="In Ref. 6; BAD94012." evidence="19" ref="6">
    <original>S</original>
    <variation>G</variation>
    <location>
        <position position="400"/>
    </location>
</feature>
<feature type="sequence conflict" description="In Ref. 7; BAH20034." evidence="19" ref="7">
    <original>K</original>
    <variation>E</variation>
    <location>
        <position position="459"/>
    </location>
</feature>
<protein>
    <recommendedName>
        <fullName evidence="17">Beta-glucosidase 23</fullName>
        <shortName evidence="17">AtBGLU23</shortName>
        <ecNumber evidence="14">3.2.1.21</ecNumber>
    </recommendedName>
    <alternativeName>
        <fullName>Protein PHOSPHATE STARVATION-RESPONSE 3.1</fullName>
    </alternativeName>
</protein>
<proteinExistence type="evidence at protein level"/>
<comment type="function">
    <text evidence="8 9 10 14">Beta-D-glucosidase active on scopolin &gt; esculin &gt;&gt; 4-MU-glucoside &gt;&gt; DIMBOA-glucoside. No activity with pNP-glucoside, oNP-glucoside and sinigrin as substrates. May possess beta-D-fucosidase activity. Required for the beneficial interaction with the endophytic fungus P.indica. May participate in the control of root colonization by P.indica by repressing defense responses and modulating other responses required for a mutualistic interaction.</text>
</comment>
<comment type="catalytic activity">
    <reaction evidence="14">
        <text>Hydrolysis of terminal, non-reducing beta-D-glucosyl residues with release of beta-D-glucose.</text>
        <dbReference type="EC" id="3.2.1.21"/>
    </reaction>
</comment>
<comment type="activity regulation">
    <text evidence="9 14">Activated by tissue damage and upon binding to PBP1 or PBP2.</text>
</comment>
<comment type="biophysicochemical properties">
    <kinetics>
        <KM evidence="14">0.81 mM for scopolin (with recombinant enzyme)</KM>
        <KM evidence="14">0.73 mM for scopolin (with native enzyme)</KM>
        <KM evidence="14">9.7 mM for esculin (with recombinant enzyme)</KM>
        <KM evidence="14">5.8 mM for esculin (with native enzyme)</KM>
    </kinetics>
    <phDependence>
        <text evidence="14">Optimum pH is 5.5.</text>
    </phDependence>
    <temperatureDependence>
        <text evidence="14">Optimum temperature is 35 degrees Celsius.</text>
    </temperatureDependence>
</comment>
<comment type="subunit">
    <text evidence="9 11 13 15">Homodimers. Binds to the deubiquitinating enzyme AMSH3. The inactive form interacts with PBP1/JAL30 to form the PYK10 complex, at least composed of PYK10/BGLU23, BGLU21, BGLU22, JAL22, JAL23, PBP1/JAL30, PBP2/JAL31, JAL32, JAL33, JAL34, JAL35, GLL22 and GLL23.</text>
</comment>
<comment type="subcellular location">
    <subcellularLocation>
        <location evidence="5 7 8 9 10 12">Endoplasmic reticulum lumen</location>
    </subcellularLocation>
    <text>Located in ER bodies.</text>
</comment>
<comment type="tissue specificity">
    <text evidence="6 14">Expressed exclusively in roots.</text>
</comment>
<comment type="induction">
    <text evidence="9 14">Up-regulated by wounding, 2,4-D and methyl jasmonate (MeJA). Down-regulated by salt and mannitol.</text>
</comment>
<comment type="PTM">
    <text>Forms interchain disulfide bonds.</text>
</comment>
<comment type="similarity">
    <text evidence="19">Belongs to the glycosyl hydrolase 1 family.</text>
</comment>
<comment type="sequence caution" evidence="19">
    <conflict type="frameshift">
        <sequence resource="EMBL-CDS" id="AAB38783"/>
    </conflict>
</comment>
<comment type="sequence caution" evidence="19">
    <conflict type="erroneous initiation">
        <sequence resource="EMBL-CDS" id="BAD94012"/>
    </conflict>
    <text>Truncated N-terminus.</text>
</comment>
<dbReference type="EC" id="3.2.1.21" evidence="14"/>
<dbReference type="EMBL" id="U72153">
    <property type="protein sequence ID" value="AAB38783.1"/>
    <property type="status" value="ALT_FRAME"/>
    <property type="molecule type" value="mRNA"/>
</dbReference>
<dbReference type="EMBL" id="X89413">
    <property type="protein sequence ID" value="CAA61592.1"/>
    <property type="molecule type" value="mRNA"/>
</dbReference>
<dbReference type="EMBL" id="AJ243490">
    <property type="protein sequence ID" value="CAB50792.1"/>
    <property type="molecule type" value="Genomic_DNA"/>
</dbReference>
<dbReference type="EMBL" id="AC011436">
    <property type="protein sequence ID" value="AAF14024.1"/>
    <property type="molecule type" value="Genomic_DNA"/>
</dbReference>
<dbReference type="EMBL" id="CP002686">
    <property type="protein sequence ID" value="AEE74744.1"/>
    <property type="molecule type" value="Genomic_DNA"/>
</dbReference>
<dbReference type="EMBL" id="AF386967">
    <property type="protein sequence ID" value="AAK62412.1"/>
    <property type="molecule type" value="mRNA"/>
</dbReference>
<dbReference type="EMBL" id="AY136440">
    <property type="protein sequence ID" value="AAM97105.1"/>
    <property type="molecule type" value="mRNA"/>
</dbReference>
<dbReference type="EMBL" id="AY140060">
    <property type="protein sequence ID" value="AAM98201.1"/>
    <property type="molecule type" value="mRNA"/>
</dbReference>
<dbReference type="EMBL" id="BT000230">
    <property type="protein sequence ID" value="AAN15549.1"/>
    <property type="molecule type" value="mRNA"/>
</dbReference>
<dbReference type="EMBL" id="AK221291">
    <property type="protein sequence ID" value="BAD94012.1"/>
    <property type="status" value="ALT_INIT"/>
    <property type="molecule type" value="mRNA"/>
</dbReference>
<dbReference type="EMBL" id="AK226844">
    <property type="protein sequence ID" value="BAE98937.1"/>
    <property type="molecule type" value="mRNA"/>
</dbReference>
<dbReference type="EMBL" id="AK230345">
    <property type="protein sequence ID" value="BAF02144.1"/>
    <property type="molecule type" value="mRNA"/>
</dbReference>
<dbReference type="EMBL" id="AK317362">
    <property type="protein sequence ID" value="BAH20034.1"/>
    <property type="molecule type" value="mRNA"/>
</dbReference>
<dbReference type="EMBL" id="AK317443">
    <property type="protein sequence ID" value="BAH20110.1"/>
    <property type="molecule type" value="mRNA"/>
</dbReference>
<dbReference type="PIR" id="S57621">
    <property type="entry name" value="S57621"/>
</dbReference>
<dbReference type="RefSeq" id="NP_187537.1">
    <property type="nucleotide sequence ID" value="NM_111760.3"/>
</dbReference>
<dbReference type="SMR" id="Q9SR37"/>
<dbReference type="BioGRID" id="5416">
    <property type="interactions" value="6"/>
</dbReference>
<dbReference type="FunCoup" id="Q9SR37">
    <property type="interactions" value="199"/>
</dbReference>
<dbReference type="STRING" id="3702.Q9SR37"/>
<dbReference type="CAZy" id="GH1">
    <property type="family name" value="Glycoside Hydrolase Family 1"/>
</dbReference>
<dbReference type="GlyCosmos" id="Q9SR37">
    <property type="glycosylation" value="3 sites, No reported glycans"/>
</dbReference>
<dbReference type="GlyGen" id="Q9SR37">
    <property type="glycosylation" value="3 sites"/>
</dbReference>
<dbReference type="iPTMnet" id="Q9SR37"/>
<dbReference type="MetOSite" id="Q9SR37"/>
<dbReference type="SwissPalm" id="Q9SR37"/>
<dbReference type="PaxDb" id="3702-AT3G09260.1"/>
<dbReference type="ProteomicsDB" id="240418"/>
<dbReference type="EnsemblPlants" id="AT3G09260.1">
    <property type="protein sequence ID" value="AT3G09260.1"/>
    <property type="gene ID" value="AT3G09260"/>
</dbReference>
<dbReference type="GeneID" id="820082"/>
<dbReference type="Gramene" id="AT3G09260.1">
    <property type="protein sequence ID" value="AT3G09260.1"/>
    <property type="gene ID" value="AT3G09260"/>
</dbReference>
<dbReference type="KEGG" id="ath:AT3G09260"/>
<dbReference type="Araport" id="AT3G09260"/>
<dbReference type="TAIR" id="AT3G09260">
    <property type="gene designation" value="PYK10"/>
</dbReference>
<dbReference type="eggNOG" id="KOG0626">
    <property type="taxonomic scope" value="Eukaryota"/>
</dbReference>
<dbReference type="HOGENOM" id="CLU_001859_1_0_1"/>
<dbReference type="InParanoid" id="Q9SR37"/>
<dbReference type="OMA" id="DMFRIME"/>
<dbReference type="OrthoDB" id="1032033at2759"/>
<dbReference type="PhylomeDB" id="Q9SR37"/>
<dbReference type="BioCyc" id="ARA:AT3G09260-MONOMER"/>
<dbReference type="BRENDA" id="3.2.1.21">
    <property type="organism ID" value="399"/>
</dbReference>
<dbReference type="PRO" id="PR:Q9SR37"/>
<dbReference type="Proteomes" id="UP000006548">
    <property type="component" value="Chromosome 3"/>
</dbReference>
<dbReference type="ExpressionAtlas" id="Q9SR37">
    <property type="expression patterns" value="baseline and differential"/>
</dbReference>
<dbReference type="GO" id="GO:0005829">
    <property type="term" value="C:cytosol"/>
    <property type="evidence" value="ECO:0007005"/>
    <property type="project" value="TAIR"/>
</dbReference>
<dbReference type="GO" id="GO:0005783">
    <property type="term" value="C:endoplasmic reticulum"/>
    <property type="evidence" value="ECO:0007005"/>
    <property type="project" value="TAIR"/>
</dbReference>
<dbReference type="GO" id="GO:0005788">
    <property type="term" value="C:endoplasmic reticulum lumen"/>
    <property type="evidence" value="ECO:0007669"/>
    <property type="project" value="UniProtKB-SubCell"/>
</dbReference>
<dbReference type="GO" id="GO:0010168">
    <property type="term" value="C:ER body"/>
    <property type="evidence" value="ECO:0000314"/>
    <property type="project" value="TAIR"/>
</dbReference>
<dbReference type="GO" id="GO:0005634">
    <property type="term" value="C:nucleus"/>
    <property type="evidence" value="ECO:0007005"/>
    <property type="project" value="TAIR"/>
</dbReference>
<dbReference type="GO" id="GO:0005777">
    <property type="term" value="C:peroxisome"/>
    <property type="evidence" value="ECO:0007005"/>
    <property type="project" value="TAIR"/>
</dbReference>
<dbReference type="GO" id="GO:0000325">
    <property type="term" value="C:plant-type vacuole"/>
    <property type="evidence" value="ECO:0007005"/>
    <property type="project" value="TAIR"/>
</dbReference>
<dbReference type="GO" id="GO:0009506">
    <property type="term" value="C:plasmodesma"/>
    <property type="evidence" value="ECO:0007005"/>
    <property type="project" value="TAIR"/>
</dbReference>
<dbReference type="GO" id="GO:0008422">
    <property type="term" value="F:beta-glucosidase activity"/>
    <property type="evidence" value="ECO:0000314"/>
    <property type="project" value="TAIR"/>
</dbReference>
<dbReference type="GO" id="GO:0005507">
    <property type="term" value="F:copper ion binding"/>
    <property type="evidence" value="ECO:0007005"/>
    <property type="project" value="TAIR"/>
</dbReference>
<dbReference type="GO" id="GO:0015928">
    <property type="term" value="F:fucosidase activity"/>
    <property type="evidence" value="ECO:0000304"/>
    <property type="project" value="TAIR"/>
</dbReference>
<dbReference type="GO" id="GO:0002020">
    <property type="term" value="F:protease binding"/>
    <property type="evidence" value="ECO:0000353"/>
    <property type="project" value="UniProtKB"/>
</dbReference>
<dbReference type="GO" id="GO:0042803">
    <property type="term" value="F:protein homodimerization activity"/>
    <property type="evidence" value="ECO:0000314"/>
    <property type="project" value="UniProtKB"/>
</dbReference>
<dbReference type="GO" id="GO:0019137">
    <property type="term" value="F:thioglucosidase activity"/>
    <property type="evidence" value="ECO:0000314"/>
    <property type="project" value="TAIR"/>
</dbReference>
<dbReference type="GO" id="GO:0005975">
    <property type="term" value="P:carbohydrate metabolic process"/>
    <property type="evidence" value="ECO:0007669"/>
    <property type="project" value="InterPro"/>
</dbReference>
<dbReference type="GO" id="GO:0070417">
    <property type="term" value="P:cellular response to cold"/>
    <property type="evidence" value="ECO:0000270"/>
    <property type="project" value="TAIR"/>
</dbReference>
<dbReference type="GO" id="GO:0080119">
    <property type="term" value="P:ER body organization"/>
    <property type="evidence" value="ECO:0000315"/>
    <property type="project" value="TAIR"/>
</dbReference>
<dbReference type="GO" id="GO:0019762">
    <property type="term" value="P:glucosinolate catabolic process"/>
    <property type="evidence" value="ECO:0000314"/>
    <property type="project" value="TAIR"/>
</dbReference>
<dbReference type="GO" id="GO:0019760">
    <property type="term" value="P:glucosinolate metabolic process"/>
    <property type="evidence" value="ECO:0000314"/>
    <property type="project" value="TAIR"/>
</dbReference>
<dbReference type="GO" id="GO:0042344">
    <property type="term" value="P:indole glucosinolate catabolic process"/>
    <property type="evidence" value="ECO:0000314"/>
    <property type="project" value="TAIR"/>
</dbReference>
<dbReference type="GO" id="GO:0042343">
    <property type="term" value="P:indole glucosinolate metabolic process"/>
    <property type="evidence" value="ECO:0000314"/>
    <property type="project" value="TAIR"/>
</dbReference>
<dbReference type="GO" id="GO:0031348">
    <property type="term" value="P:negative regulation of defense response"/>
    <property type="evidence" value="ECO:0000315"/>
    <property type="project" value="UniProtKB"/>
</dbReference>
<dbReference type="GO" id="GO:0006970">
    <property type="term" value="P:response to osmotic stress"/>
    <property type="evidence" value="ECO:0000270"/>
    <property type="project" value="TAIR"/>
</dbReference>
<dbReference type="GO" id="GO:0009610">
    <property type="term" value="P:response to symbiotic fungus"/>
    <property type="evidence" value="ECO:0000315"/>
    <property type="project" value="TAIR"/>
</dbReference>
<dbReference type="FunFam" id="3.20.20.80:FF:000022">
    <property type="entry name" value="Beta-glucosidase 11"/>
    <property type="match status" value="1"/>
</dbReference>
<dbReference type="Gene3D" id="3.20.20.80">
    <property type="entry name" value="Glycosidases"/>
    <property type="match status" value="1"/>
</dbReference>
<dbReference type="InterPro" id="IPR001360">
    <property type="entry name" value="Glyco_hydro_1"/>
</dbReference>
<dbReference type="InterPro" id="IPR033132">
    <property type="entry name" value="Glyco_hydro_1_N_CS"/>
</dbReference>
<dbReference type="InterPro" id="IPR017853">
    <property type="entry name" value="Glycoside_hydrolase_SF"/>
</dbReference>
<dbReference type="PANTHER" id="PTHR10353:SF266">
    <property type="entry name" value="BETA-GLUCOSIDASE 21-RELATED"/>
    <property type="match status" value="1"/>
</dbReference>
<dbReference type="PANTHER" id="PTHR10353">
    <property type="entry name" value="GLYCOSYL HYDROLASE"/>
    <property type="match status" value="1"/>
</dbReference>
<dbReference type="Pfam" id="PF00232">
    <property type="entry name" value="Glyco_hydro_1"/>
    <property type="match status" value="1"/>
</dbReference>
<dbReference type="PRINTS" id="PR00131">
    <property type="entry name" value="GLHYDRLASE1"/>
</dbReference>
<dbReference type="SUPFAM" id="SSF51445">
    <property type="entry name" value="(Trans)glycosidases"/>
    <property type="match status" value="1"/>
</dbReference>
<dbReference type="PROSITE" id="PS00014">
    <property type="entry name" value="ER_TARGET"/>
    <property type="match status" value="1"/>
</dbReference>
<dbReference type="PROSITE" id="PS00653">
    <property type="entry name" value="GLYCOSYL_HYDROL_F1_2"/>
    <property type="match status" value="1"/>
</dbReference>
<accession>Q9SR37</accession>
<accession>B9DH17</accession>
<accession>O24433</accession>
<accession>Q42585</accession>
<accession>Q56YN0</accession>
<organism>
    <name type="scientific">Arabidopsis thaliana</name>
    <name type="common">Mouse-ear cress</name>
    <dbReference type="NCBI Taxonomy" id="3702"/>
    <lineage>
        <taxon>Eukaryota</taxon>
        <taxon>Viridiplantae</taxon>
        <taxon>Streptophyta</taxon>
        <taxon>Embryophyta</taxon>
        <taxon>Tracheophyta</taxon>
        <taxon>Spermatophyta</taxon>
        <taxon>Magnoliopsida</taxon>
        <taxon>eudicotyledons</taxon>
        <taxon>Gunneridae</taxon>
        <taxon>Pentapetalae</taxon>
        <taxon>rosids</taxon>
        <taxon>malvids</taxon>
        <taxon>Brassicales</taxon>
        <taxon>Brassicaceae</taxon>
        <taxon>Camelineae</taxon>
        <taxon>Arabidopsis</taxon>
    </lineage>
</organism>
<gene>
    <name evidence="17" type="primary">BGLU23</name>
    <name type="synonym">PSR3.1</name>
    <name evidence="16 18" type="synonym">PYK10</name>
    <name evidence="20" type="ordered locus">At3g09260</name>
    <name evidence="21" type="ORF">F3L24.13</name>
</gene>
<sequence>MVLQKLPLIGLLLLLTIVASPANADGPVCPPSNKLSRASFPEGFLFGTATAAYQVEGAINETCRGPALWDIYCRRYPERCNNDNGDVAVDFFHRYKEDIQLMKNLNTDAFRMSIAWPRIFPHGRKEKGVSQAGVQFYHDLIDELIKNGITPFVTVFHWDTPQDLEDEYGGFLSERIVKDFREYADFVFQEYGGKVKHWITFNEPWVFSHAGYDVGKKAPGRCSSYVNAKCQDGRSGYEAYLVTHNLLISHAEAVEAYRKCEKCKGGKIGIAHSPAWFEAHDLADSQDGASIDRALDFILGWHLDTTTFGDYPQIMKDIVGHRLPKFTTEQKAKLKASTDFVGLNYYTSVFSNHLEKPDPSKPRWMQDSLITWESKNAQNYAIGSKPLTAALNVYSRGFRSLLKYIKDKYANPEIMIMENGYGEELGASDSVAVGTADHNRKYYLQRHLLSMQEAVCIDKVNVTGYFVWSLLDNFEWQDGYKNRFGLYYVDFKNNLTRYEKESGKYYKDFLSQGVRPSALKKDEL</sequence>
<keyword id="KW-0903">Direct protein sequencing</keyword>
<keyword id="KW-1015">Disulfide bond</keyword>
<keyword id="KW-0256">Endoplasmic reticulum</keyword>
<keyword id="KW-0325">Glycoprotein</keyword>
<keyword id="KW-0326">Glycosidase</keyword>
<keyword id="KW-0378">Hydrolase</keyword>
<keyword id="KW-1185">Reference proteome</keyword>
<keyword id="KW-0732">Signal</keyword>
<reference key="1">
    <citation type="online journal article" date="1996" name="Plant Gene Register">
        <title>Identification and nucleotide sequences of cDNA clones of phosphate-starvation inducible beta-glucosidase genes of Brassicaceae.</title>
        <authorList>
            <person name="Malboobi M.A."/>
            <person name="Tremblay L."/>
            <person name="Lefebvre D.D."/>
        </authorList>
        <locator>PGR96-114</locator>
    </citation>
    <scope>NUCLEOTIDE SEQUENCE [MRNA]</scope>
    <source>
        <strain>cv. Columbia</strain>
        <tissue>Root</tissue>
    </source>
</reference>
<reference key="2">
    <citation type="journal article" date="2001" name="Plant Sci.">
        <title>Pyk10, a seedling and root specific gene and promoter from Arabidopsis thaliana.</title>
        <authorList>
            <person name="Nitz I."/>
            <person name="Berkefeld H."/>
            <person name="Puzio P.S."/>
            <person name="Grundler F.M."/>
        </authorList>
    </citation>
    <scope>NUCLEOTIDE SEQUENCE [GENOMIC DNA / MRNA]</scope>
    <scope>TISSUE SPECIFICITY</scope>
    <source>
        <strain>cv. C24</strain>
    </source>
</reference>
<reference key="3">
    <citation type="journal article" date="2000" name="Nature">
        <title>Sequence and analysis of chromosome 3 of the plant Arabidopsis thaliana.</title>
        <authorList>
            <person name="Salanoubat M."/>
            <person name="Lemcke K."/>
            <person name="Rieger M."/>
            <person name="Ansorge W."/>
            <person name="Unseld M."/>
            <person name="Fartmann B."/>
            <person name="Valle G."/>
            <person name="Bloecker H."/>
            <person name="Perez-Alonso M."/>
            <person name="Obermaier B."/>
            <person name="Delseny M."/>
            <person name="Boutry M."/>
            <person name="Grivell L.A."/>
            <person name="Mache R."/>
            <person name="Puigdomenech P."/>
            <person name="De Simone V."/>
            <person name="Choisne N."/>
            <person name="Artiguenave F."/>
            <person name="Robert C."/>
            <person name="Brottier P."/>
            <person name="Wincker P."/>
            <person name="Cattolico L."/>
            <person name="Weissenbach J."/>
            <person name="Saurin W."/>
            <person name="Quetier F."/>
            <person name="Schaefer M."/>
            <person name="Mueller-Auer S."/>
            <person name="Gabel C."/>
            <person name="Fuchs M."/>
            <person name="Benes V."/>
            <person name="Wurmbach E."/>
            <person name="Drzonek H."/>
            <person name="Erfle H."/>
            <person name="Jordan N."/>
            <person name="Bangert S."/>
            <person name="Wiedelmann R."/>
            <person name="Kranz H."/>
            <person name="Voss H."/>
            <person name="Holland R."/>
            <person name="Brandt P."/>
            <person name="Nyakatura G."/>
            <person name="Vezzi A."/>
            <person name="D'Angelo M."/>
            <person name="Pallavicini A."/>
            <person name="Toppo S."/>
            <person name="Simionati B."/>
            <person name="Conrad A."/>
            <person name="Hornischer K."/>
            <person name="Kauer G."/>
            <person name="Loehnert T.-H."/>
            <person name="Nordsiek G."/>
            <person name="Reichelt J."/>
            <person name="Scharfe M."/>
            <person name="Schoen O."/>
            <person name="Bargues M."/>
            <person name="Terol J."/>
            <person name="Climent J."/>
            <person name="Navarro P."/>
            <person name="Collado C."/>
            <person name="Perez-Perez A."/>
            <person name="Ottenwaelder B."/>
            <person name="Duchemin D."/>
            <person name="Cooke R."/>
            <person name="Laudie M."/>
            <person name="Berger-Llauro C."/>
            <person name="Purnelle B."/>
            <person name="Masuy D."/>
            <person name="de Haan M."/>
            <person name="Maarse A.C."/>
            <person name="Alcaraz J.-P."/>
            <person name="Cottet A."/>
            <person name="Casacuberta E."/>
            <person name="Monfort A."/>
            <person name="Argiriou A."/>
            <person name="Flores M."/>
            <person name="Liguori R."/>
            <person name="Vitale D."/>
            <person name="Mannhaupt G."/>
            <person name="Haase D."/>
            <person name="Schoof H."/>
            <person name="Rudd S."/>
            <person name="Zaccaria P."/>
            <person name="Mewes H.-W."/>
            <person name="Mayer K.F.X."/>
            <person name="Kaul S."/>
            <person name="Town C.D."/>
            <person name="Koo H.L."/>
            <person name="Tallon L.J."/>
            <person name="Jenkins J."/>
            <person name="Rooney T."/>
            <person name="Rizzo M."/>
            <person name="Walts A."/>
            <person name="Utterback T."/>
            <person name="Fujii C.Y."/>
            <person name="Shea T.P."/>
            <person name="Creasy T.H."/>
            <person name="Haas B."/>
            <person name="Maiti R."/>
            <person name="Wu D."/>
            <person name="Peterson J."/>
            <person name="Van Aken S."/>
            <person name="Pai G."/>
            <person name="Militscher J."/>
            <person name="Sellers P."/>
            <person name="Gill J.E."/>
            <person name="Feldblyum T.V."/>
            <person name="Preuss D."/>
            <person name="Lin X."/>
            <person name="Nierman W.C."/>
            <person name="Salzberg S.L."/>
            <person name="White O."/>
            <person name="Venter J.C."/>
            <person name="Fraser C.M."/>
            <person name="Kaneko T."/>
            <person name="Nakamura Y."/>
            <person name="Sato S."/>
            <person name="Kato T."/>
            <person name="Asamizu E."/>
            <person name="Sasamoto S."/>
            <person name="Kimura T."/>
            <person name="Idesawa K."/>
            <person name="Kawashima K."/>
            <person name="Kishida Y."/>
            <person name="Kiyokawa C."/>
            <person name="Kohara M."/>
            <person name="Matsumoto M."/>
            <person name="Matsuno A."/>
            <person name="Muraki A."/>
            <person name="Nakayama S."/>
            <person name="Nakazaki N."/>
            <person name="Shinpo S."/>
            <person name="Takeuchi C."/>
            <person name="Wada T."/>
            <person name="Watanabe A."/>
            <person name="Yamada M."/>
            <person name="Yasuda M."/>
            <person name="Tabata S."/>
        </authorList>
    </citation>
    <scope>NUCLEOTIDE SEQUENCE [LARGE SCALE GENOMIC DNA]</scope>
    <source>
        <strain>cv. Columbia</strain>
    </source>
</reference>
<reference key="4">
    <citation type="journal article" date="2017" name="Plant J.">
        <title>Araport11: a complete reannotation of the Arabidopsis thaliana reference genome.</title>
        <authorList>
            <person name="Cheng C.Y."/>
            <person name="Krishnakumar V."/>
            <person name="Chan A.P."/>
            <person name="Thibaud-Nissen F."/>
            <person name="Schobel S."/>
            <person name="Town C.D."/>
        </authorList>
    </citation>
    <scope>GENOME REANNOTATION</scope>
    <source>
        <strain>cv. Columbia</strain>
    </source>
</reference>
<reference key="5">
    <citation type="journal article" date="2003" name="Science">
        <title>Empirical analysis of transcriptional activity in the Arabidopsis genome.</title>
        <authorList>
            <person name="Yamada K."/>
            <person name="Lim J."/>
            <person name="Dale J.M."/>
            <person name="Chen H."/>
            <person name="Shinn P."/>
            <person name="Palm C.J."/>
            <person name="Southwick A.M."/>
            <person name="Wu H.C."/>
            <person name="Kim C.J."/>
            <person name="Nguyen M."/>
            <person name="Pham P.K."/>
            <person name="Cheuk R.F."/>
            <person name="Karlin-Newmann G."/>
            <person name="Liu S.X."/>
            <person name="Lam B."/>
            <person name="Sakano H."/>
            <person name="Wu T."/>
            <person name="Yu G."/>
            <person name="Miranda M."/>
            <person name="Quach H.L."/>
            <person name="Tripp M."/>
            <person name="Chang C.H."/>
            <person name="Lee J.M."/>
            <person name="Toriumi M.J."/>
            <person name="Chan M.M."/>
            <person name="Tang C.C."/>
            <person name="Onodera C.S."/>
            <person name="Deng J.M."/>
            <person name="Akiyama K."/>
            <person name="Ansari Y."/>
            <person name="Arakawa T."/>
            <person name="Banh J."/>
            <person name="Banno F."/>
            <person name="Bowser L."/>
            <person name="Brooks S.Y."/>
            <person name="Carninci P."/>
            <person name="Chao Q."/>
            <person name="Choy N."/>
            <person name="Enju A."/>
            <person name="Goldsmith A.D."/>
            <person name="Gurjal M."/>
            <person name="Hansen N.F."/>
            <person name="Hayashizaki Y."/>
            <person name="Johnson-Hopson C."/>
            <person name="Hsuan V.W."/>
            <person name="Iida K."/>
            <person name="Karnes M."/>
            <person name="Khan S."/>
            <person name="Koesema E."/>
            <person name="Ishida J."/>
            <person name="Jiang P.X."/>
            <person name="Jones T."/>
            <person name="Kawai J."/>
            <person name="Kamiya A."/>
            <person name="Meyers C."/>
            <person name="Nakajima M."/>
            <person name="Narusaka M."/>
            <person name="Seki M."/>
            <person name="Sakurai T."/>
            <person name="Satou M."/>
            <person name="Tamse R."/>
            <person name="Vaysberg M."/>
            <person name="Wallender E.K."/>
            <person name="Wong C."/>
            <person name="Yamamura Y."/>
            <person name="Yuan S."/>
            <person name="Shinozaki K."/>
            <person name="Davis R.W."/>
            <person name="Theologis A."/>
            <person name="Ecker J.R."/>
        </authorList>
    </citation>
    <scope>NUCLEOTIDE SEQUENCE [LARGE SCALE MRNA]</scope>
    <source>
        <strain>cv. Columbia</strain>
    </source>
</reference>
<reference key="6">
    <citation type="submission" date="2006-07" db="EMBL/GenBank/DDBJ databases">
        <title>Large-scale analysis of RIKEN Arabidopsis full-length (RAFL) cDNAs.</title>
        <authorList>
            <person name="Totoki Y."/>
            <person name="Seki M."/>
            <person name="Ishida J."/>
            <person name="Nakajima M."/>
            <person name="Enju A."/>
            <person name="Kamiya A."/>
            <person name="Narusaka M."/>
            <person name="Shin-i T."/>
            <person name="Nakagawa M."/>
            <person name="Sakamoto N."/>
            <person name="Oishi K."/>
            <person name="Kohara Y."/>
            <person name="Kobayashi M."/>
            <person name="Toyoda A."/>
            <person name="Sakaki Y."/>
            <person name="Sakurai T."/>
            <person name="Iida K."/>
            <person name="Akiyama K."/>
            <person name="Satou M."/>
            <person name="Toyoda T."/>
            <person name="Konagaya A."/>
            <person name="Carninci P."/>
            <person name="Kawai J."/>
            <person name="Hayashizaki Y."/>
            <person name="Shinozaki K."/>
        </authorList>
    </citation>
    <scope>NUCLEOTIDE SEQUENCE [LARGE SCALE MRNA]</scope>
    <source>
        <strain>cv. Columbia</strain>
    </source>
</reference>
<reference key="7">
    <citation type="journal article" date="2009" name="DNA Res.">
        <title>Analysis of multiple occurrences of alternative splicing events in Arabidopsis thaliana using novel sequenced full-length cDNAs.</title>
        <authorList>
            <person name="Iida K."/>
            <person name="Fukami-Kobayashi K."/>
            <person name="Toyoda A."/>
            <person name="Sakaki Y."/>
            <person name="Kobayashi M."/>
            <person name="Seki M."/>
            <person name="Shinozaki K."/>
        </authorList>
    </citation>
    <scope>NUCLEOTIDE SEQUENCE [LARGE SCALE MRNA]</scope>
    <source>
        <strain>cv. Columbia</strain>
    </source>
</reference>
<reference key="8">
    <citation type="journal article" date="2003" name="Plant J.">
        <title>A novel ER-derived compartment, the ER body, selectively accumulates a beta-glucosidase with an ER-retention signal in Arabidopsis.</title>
        <authorList>
            <person name="Matsushima R."/>
            <person name="Kondo M."/>
            <person name="Nishimura M."/>
            <person name="Hara-Nishimura I."/>
        </authorList>
    </citation>
    <scope>PROTEIN SEQUENCE OF 25-41</scope>
    <scope>SUBCELLULAR LOCATION</scope>
</reference>
<reference key="9">
    <citation type="journal article" date="2004" name="Plant Cell">
        <title>NAI1 gene encodes a basic-helix-loop-helix-type putative transcription factor that regulates the formation of an endoplasmic reticulum-derived structure, the ER body.</title>
        <authorList>
            <person name="Matsushima R."/>
            <person name="Fukao Y."/>
            <person name="Nishimura M."/>
            <person name="Hara-Nishimura I."/>
        </authorList>
    </citation>
    <scope>FUNCTION</scope>
    <scope>SUBCELLULAR LOCATION</scope>
    <scope>IDENTIFICATION BY MASS SPECTROMETRY</scope>
</reference>
<reference key="10">
    <citation type="journal article" date="2004" name="Plant Mol. Biol.">
        <title>Functional genomic analysis of Arabidopsis thaliana glycoside hydrolase family 1.</title>
        <authorList>
            <person name="Xu Z."/>
            <person name="Escamilla-Trevino L.L."/>
            <person name="Zeng L."/>
            <person name="Lalgondar M."/>
            <person name="Bevan D.R."/>
            <person name="Winkel B.S.J."/>
            <person name="Mohamed A."/>
            <person name="Cheng C.-L."/>
            <person name="Shih M.-C."/>
            <person name="Poulton J.E."/>
            <person name="Esen A."/>
        </authorList>
    </citation>
    <scope>GENE FAMILY</scope>
    <scope>NOMENCLATURE</scope>
</reference>
<reference key="11">
    <citation type="journal article" date="2005" name="Plant Cell Physiol.">
        <title>Activation of an ER-body-localized beta-glucosidase via a cytosolic binding partner in damaged tissues of Arabidopsis thaliana.</title>
        <authorList>
            <person name="Nagano A.J."/>
            <person name="Matsushima R."/>
            <person name="Hara-Nishimura I."/>
        </authorList>
    </citation>
    <scope>FUNCTION</scope>
    <scope>INDUCTION</scope>
    <scope>ACTIVITY REGULATION</scope>
    <scope>SUBUNIT</scope>
    <scope>DISULFIDE BOND</scope>
    <scope>SUBCELLULAR LOCATION</scope>
    <scope>INTERACTION WITH PBP1</scope>
    <source>
        <strain>cv. Columbia</strain>
    </source>
</reference>
<reference key="12">
    <citation type="journal article" date="2007" name="Plant Cell">
        <title>Proteome analysis of Arabidopsis leaf peroxisomes reveals novel targeting peptides, metabolic pathways, and defense mechanisms.</title>
        <authorList>
            <person name="Reumann S."/>
            <person name="Babujee L."/>
            <person name="Ma C."/>
            <person name="Wienkoop S."/>
            <person name="Siemsen T."/>
            <person name="Antonicelli G.E."/>
            <person name="Rasche N."/>
            <person name="Lueder F."/>
            <person name="Weckwerth W."/>
            <person name="Jahn O."/>
        </authorList>
    </citation>
    <scope>IDENTIFICATION BY MASS SPECTROMETRY</scope>
</reference>
<reference key="13">
    <citation type="journal article" date="2008" name="Plant Cell Physiol.">
        <title>Antagonistic jacalin-related lectins regulate the size of ER body-type beta-glucosidase complexes in Arabidopsis thaliana.</title>
        <authorList>
            <person name="Nagano A.J."/>
            <person name="Fukao Y."/>
            <person name="Fujiwara M."/>
            <person name="Nishimura M."/>
            <person name="Hara-Nishimura I."/>
        </authorList>
    </citation>
    <scope>IDENTIFICATION IN THE PYK10 COMPLEX</scope>
</reference>
<reference key="14">
    <citation type="journal article" date="2008" name="Plant J.">
        <title>PYK10, a beta-glucosidase located in the endoplasmatic reticulum, is crucial for the beneficial interaction between Arabidopsis thaliana and the endophytic fungus Piriformospora indica.</title>
        <authorList>
            <person name="Sherameti I."/>
            <person name="Venus Y."/>
            <person name="Drzewiecki C."/>
            <person name="Tripathi S."/>
            <person name="Dan V.M."/>
            <person name="Nitz I."/>
            <person name="Varma A."/>
            <person name="Grundler F.M."/>
            <person name="Oelmueller R."/>
        </authorList>
    </citation>
    <scope>FUNCTION</scope>
    <scope>SUBCELLULAR LOCATION</scope>
    <scope>IDENTIFICATION BY MASS SPECTROMETRY</scope>
</reference>
<reference key="15">
    <citation type="journal article" date="2009" name="J. Proteomics">
        <title>Phosphoproteomic analysis of nuclei-enriched fractions from Arabidopsis thaliana.</title>
        <authorList>
            <person name="Jones A.M.E."/>
            <person name="MacLean D."/>
            <person name="Studholme D.J."/>
            <person name="Serna-Sanz A."/>
            <person name="Andreasson E."/>
            <person name="Rathjen J.P."/>
            <person name="Peck S.C."/>
        </authorList>
    </citation>
    <scope>IDENTIFICATION BY MASS SPECTROMETRY [LARGE SCALE ANALYSIS]</scope>
    <source>
        <strain>cv. Columbia</strain>
    </source>
</reference>
<reference key="16">
    <citation type="journal article" date="2009" name="Plant Cell Physiol.">
        <title>Constitutive and inducible ER bodies of Arabidopsis thaliana accumulate distinct beta-glucosidases.</title>
        <authorList>
            <person name="Ogasawara K."/>
            <person name="Yamada K."/>
            <person name="Christeller J.T."/>
            <person name="Kondo M."/>
            <person name="Hatsugai N."/>
            <person name="Hara-Nishimura I."/>
            <person name="Nishimura M."/>
        </authorList>
    </citation>
    <scope>SUBCELLULAR LOCATION</scope>
</reference>
<reference key="17">
    <citation type="journal article" date="2009" name="Plant Cell Physiol.">
        <title>Quantitative analysis of ER body morphology in an Arabidopsis mutant.</title>
        <authorList>
            <person name="Nagano A.J."/>
            <person name="Maekawa A."/>
            <person name="Nakano R.T."/>
            <person name="Miyahara M."/>
            <person name="Higaki T."/>
            <person name="Kutsuna N."/>
            <person name="Hasezawa S."/>
            <person name="Hara-Nishimura I."/>
        </authorList>
    </citation>
    <scope>MUTAGENESIS OF CYS-29</scope>
    <scope>SUBUNIT</scope>
    <source>
        <strain>cv. Columbia</strain>
    </source>
</reference>
<reference key="18">
    <citation type="journal article" date="2010" name="Plant Cell">
        <title>The deubiquitinating enzyme AMSH3 is required for intracellular trafficking and vacuole biogenesis in Arabidopsis thaliana.</title>
        <authorList>
            <person name="Isono E."/>
            <person name="Katsiarimpa A."/>
            <person name="Mueller I.K."/>
            <person name="Anzenberger F."/>
            <person name="Stierhof Y.-D."/>
            <person name="Geldner N."/>
            <person name="Chory J."/>
            <person name="Schwechheimer C."/>
        </authorList>
    </citation>
    <scope>INTERACTION WITH AMSH3</scope>
</reference>
<reference key="19">
    <citation type="journal article" date="2010" name="Plant Cell Physiol.">
        <title>Scopolin-hydrolyzing beta-glucosidases in roots of Arabidopsis.</title>
        <authorList>
            <person name="Ahn Y.O."/>
            <person name="Shimizu B."/>
            <person name="Sakata K."/>
            <person name="Gantulga D."/>
            <person name="Zhou C."/>
            <person name="Zhou Z."/>
            <person name="Bevan D.R."/>
            <person name="Esen A."/>
        </authorList>
    </citation>
    <scope>FUNCTION</scope>
    <scope>CATALYTIC ACTIVITY</scope>
    <scope>BIOPHYSICOCHEMICAL PROPERTIES</scope>
    <scope>TISSUE SPECIFICITY</scope>
    <scope>INDUCTION</scope>
    <scope>ACTIVITY REGULATION</scope>
</reference>
<evidence type="ECO:0000250" key="1">
    <source>
        <dbReference type="UniProtKB" id="Q1XH05"/>
    </source>
</evidence>
<evidence type="ECO:0000250" key="2">
    <source>
        <dbReference type="UniProtKB" id="Q7XSK0"/>
    </source>
</evidence>
<evidence type="ECO:0000250" key="3">
    <source>
        <dbReference type="UniProtKB" id="Q9SPP9"/>
    </source>
</evidence>
<evidence type="ECO:0000255" key="4">
    <source>
        <dbReference type="PROSITE-ProRule" id="PRU00498"/>
    </source>
</evidence>
<evidence type="ECO:0000255" key="5">
    <source>
        <dbReference type="PROSITE-ProRule" id="PRU10138"/>
    </source>
</evidence>
<evidence type="ECO:0000269" key="6">
    <source>
    </source>
</evidence>
<evidence type="ECO:0000269" key="7">
    <source>
    </source>
</evidence>
<evidence type="ECO:0000269" key="8">
    <source>
    </source>
</evidence>
<evidence type="ECO:0000269" key="9">
    <source>
    </source>
</evidence>
<evidence type="ECO:0000269" key="10">
    <source>
    </source>
</evidence>
<evidence type="ECO:0000269" key="11">
    <source>
    </source>
</evidence>
<evidence type="ECO:0000269" key="12">
    <source>
    </source>
</evidence>
<evidence type="ECO:0000269" key="13">
    <source>
    </source>
</evidence>
<evidence type="ECO:0000269" key="14">
    <source>
    </source>
</evidence>
<evidence type="ECO:0000269" key="15">
    <source>
    </source>
</evidence>
<evidence type="ECO:0000303" key="16">
    <source>
    </source>
</evidence>
<evidence type="ECO:0000303" key="17">
    <source>
    </source>
</evidence>
<evidence type="ECO:0000303" key="18">
    <source>
    </source>
</evidence>
<evidence type="ECO:0000305" key="19"/>
<evidence type="ECO:0000312" key="20">
    <source>
        <dbReference type="Araport" id="AT3G09260"/>
    </source>
</evidence>
<evidence type="ECO:0000312" key="21">
    <source>
        <dbReference type="EMBL" id="AAF14024.1"/>
    </source>
</evidence>